<dbReference type="EMBL" id="AY745240">
    <property type="protein sequence ID" value="AAU43787.1"/>
    <property type="molecule type" value="mRNA"/>
</dbReference>
<dbReference type="RefSeq" id="NP_001005758.1">
    <property type="nucleotide sequence ID" value="NM_001005758.1"/>
</dbReference>
<dbReference type="SMR" id="Q5XNS0"/>
<dbReference type="FunCoup" id="Q5XNS0">
    <property type="interactions" value="8"/>
</dbReference>
<dbReference type="STRING" id="9615.ENSCAFP00000065800"/>
<dbReference type="PaxDb" id="9612-ENSCAFP00000022507"/>
<dbReference type="Ensembl" id="ENSCAFT00030044144.1">
    <property type="protein sequence ID" value="ENSCAFP00030038522.1"/>
    <property type="gene ID" value="ENSCAFG00030023780.1"/>
</dbReference>
<dbReference type="Ensembl" id="ENSCAFT00040002268.1">
    <property type="protein sequence ID" value="ENSCAFP00040001935.1"/>
    <property type="gene ID" value="ENSCAFG00040001213.1"/>
</dbReference>
<dbReference type="GeneID" id="449029"/>
<dbReference type="KEGG" id="cfa:449029"/>
<dbReference type="CTD" id="9095"/>
<dbReference type="eggNOG" id="KOG3585">
    <property type="taxonomic scope" value="Eukaryota"/>
</dbReference>
<dbReference type="HOGENOM" id="CLU_038303_0_0_1"/>
<dbReference type="InParanoid" id="Q5XNS0"/>
<dbReference type="OMA" id="PHTKGAA"/>
<dbReference type="OrthoDB" id="7442607at2759"/>
<dbReference type="TreeFam" id="TF106341"/>
<dbReference type="Proteomes" id="UP000002254">
    <property type="component" value="Unplaced"/>
</dbReference>
<dbReference type="Proteomes" id="UP000694429">
    <property type="component" value="Chromosome 7"/>
</dbReference>
<dbReference type="Proteomes" id="UP000694542">
    <property type="component" value="Chromosome 7"/>
</dbReference>
<dbReference type="Proteomes" id="UP000805418">
    <property type="component" value="Unplaced"/>
</dbReference>
<dbReference type="GO" id="GO:0000785">
    <property type="term" value="C:chromatin"/>
    <property type="evidence" value="ECO:0000318"/>
    <property type="project" value="GO_Central"/>
</dbReference>
<dbReference type="GO" id="GO:0005634">
    <property type="term" value="C:nucleus"/>
    <property type="evidence" value="ECO:0000318"/>
    <property type="project" value="GO_Central"/>
</dbReference>
<dbReference type="GO" id="GO:0000981">
    <property type="term" value="F:DNA-binding transcription factor activity, RNA polymerase II-specific"/>
    <property type="evidence" value="ECO:0000318"/>
    <property type="project" value="GO_Central"/>
</dbReference>
<dbReference type="GO" id="GO:0000978">
    <property type="term" value="F:RNA polymerase II cis-regulatory region sequence-specific DNA binding"/>
    <property type="evidence" value="ECO:0000318"/>
    <property type="project" value="GO_Central"/>
</dbReference>
<dbReference type="GO" id="GO:0001708">
    <property type="term" value="P:cell fate specification"/>
    <property type="evidence" value="ECO:0000318"/>
    <property type="project" value="GO_Central"/>
</dbReference>
<dbReference type="GO" id="GO:0003007">
    <property type="term" value="P:heart morphogenesis"/>
    <property type="evidence" value="ECO:0000318"/>
    <property type="project" value="GO_Central"/>
</dbReference>
<dbReference type="GO" id="GO:0001707">
    <property type="term" value="P:mesoderm formation"/>
    <property type="evidence" value="ECO:0000318"/>
    <property type="project" value="GO_Central"/>
</dbReference>
<dbReference type="GO" id="GO:0045893">
    <property type="term" value="P:positive regulation of DNA-templated transcription"/>
    <property type="evidence" value="ECO:0007669"/>
    <property type="project" value="InterPro"/>
</dbReference>
<dbReference type="GO" id="GO:0006357">
    <property type="term" value="P:regulation of transcription by RNA polymerase II"/>
    <property type="evidence" value="ECO:0000318"/>
    <property type="project" value="GO_Central"/>
</dbReference>
<dbReference type="CDD" id="cd20201">
    <property type="entry name" value="T-box_TBX19-like"/>
    <property type="match status" value="1"/>
</dbReference>
<dbReference type="FunFam" id="2.60.40.820:FF:000002">
    <property type="entry name" value="T-box transcription factor Brachyury"/>
    <property type="match status" value="1"/>
</dbReference>
<dbReference type="Gene3D" id="2.60.40.820">
    <property type="entry name" value="Transcription factor, T-box"/>
    <property type="match status" value="1"/>
</dbReference>
<dbReference type="InterPro" id="IPR008967">
    <property type="entry name" value="p53-like_TF_DNA-bd_sf"/>
</dbReference>
<dbReference type="InterPro" id="IPR046360">
    <property type="entry name" value="T-box_DNA-bd"/>
</dbReference>
<dbReference type="InterPro" id="IPR036960">
    <property type="entry name" value="T-box_sf"/>
</dbReference>
<dbReference type="InterPro" id="IPR002070">
    <property type="entry name" value="TF_Brachyury"/>
</dbReference>
<dbReference type="InterPro" id="IPR001699">
    <property type="entry name" value="TF_T-box"/>
</dbReference>
<dbReference type="InterPro" id="IPR018186">
    <property type="entry name" value="TF_T-box_CS"/>
</dbReference>
<dbReference type="PANTHER" id="PTHR11267">
    <property type="entry name" value="T-BOX PROTEIN-RELATED"/>
    <property type="match status" value="1"/>
</dbReference>
<dbReference type="PANTHER" id="PTHR11267:SF114">
    <property type="entry name" value="T-BOX TRANSCRIPTION FACTOR TBX19"/>
    <property type="match status" value="1"/>
</dbReference>
<dbReference type="Pfam" id="PF00907">
    <property type="entry name" value="T-box"/>
    <property type="match status" value="1"/>
</dbReference>
<dbReference type="PRINTS" id="PR00938">
    <property type="entry name" value="BRACHYURY"/>
</dbReference>
<dbReference type="PRINTS" id="PR00937">
    <property type="entry name" value="TBOX"/>
</dbReference>
<dbReference type="SMART" id="SM00425">
    <property type="entry name" value="TBOX"/>
    <property type="match status" value="1"/>
</dbReference>
<dbReference type="SUPFAM" id="SSF49417">
    <property type="entry name" value="p53-like transcription factors"/>
    <property type="match status" value="1"/>
</dbReference>
<dbReference type="PROSITE" id="PS01283">
    <property type="entry name" value="TBOX_1"/>
    <property type="match status" value="1"/>
</dbReference>
<dbReference type="PROSITE" id="PS01264">
    <property type="entry name" value="TBOX_2"/>
    <property type="match status" value="1"/>
</dbReference>
<dbReference type="PROSITE" id="PS50252">
    <property type="entry name" value="TBOX_3"/>
    <property type="match status" value="1"/>
</dbReference>
<evidence type="ECO:0000250" key="1"/>
<evidence type="ECO:0000250" key="2">
    <source>
        <dbReference type="UniProtKB" id="O60806"/>
    </source>
</evidence>
<evidence type="ECO:0000255" key="3">
    <source>
        <dbReference type="PROSITE-ProRule" id="PRU00201"/>
    </source>
</evidence>
<evidence type="ECO:0000305" key="4"/>
<protein>
    <recommendedName>
        <fullName evidence="4">T-box transcription factor TBX19</fullName>
        <shortName>T-box protein 19</shortName>
    </recommendedName>
</protein>
<proteinExistence type="evidence at transcript level"/>
<feature type="chain" id="PRO_0000184448" description="T-box transcription factor TBX19">
    <location>
        <begin position="1"/>
        <end position="445"/>
    </location>
</feature>
<feature type="DNA-binding region" description="T-box" evidence="3">
    <location>
        <begin position="45"/>
        <end position="218"/>
    </location>
</feature>
<name>TBX19_CANLF</name>
<organism>
    <name type="scientific">Canis lupus familiaris</name>
    <name type="common">Dog</name>
    <name type="synonym">Canis familiaris</name>
    <dbReference type="NCBI Taxonomy" id="9615"/>
    <lineage>
        <taxon>Eukaryota</taxon>
        <taxon>Metazoa</taxon>
        <taxon>Chordata</taxon>
        <taxon>Craniata</taxon>
        <taxon>Vertebrata</taxon>
        <taxon>Euteleostomi</taxon>
        <taxon>Mammalia</taxon>
        <taxon>Eutheria</taxon>
        <taxon>Laurasiatheria</taxon>
        <taxon>Carnivora</taxon>
        <taxon>Caniformia</taxon>
        <taxon>Canidae</taxon>
        <taxon>Canis</taxon>
    </lineage>
</organism>
<reference key="1">
    <citation type="submission" date="2004-09" db="EMBL/GenBank/DDBJ databases">
        <title>Expression of Tpit in the normal canine pituitary and in corticotroph adenomas.</title>
        <authorList>
            <person name="Hanson J.M."/>
            <person name="Mol J.A."/>
            <person name="Meij B.P."/>
        </authorList>
    </citation>
    <scope>NUCLEOTIDE SEQUENCE [MRNA]</scope>
</reference>
<accession>Q5XNS0</accession>
<gene>
    <name evidence="2" type="primary">TBX19</name>
</gene>
<keyword id="KW-0010">Activator</keyword>
<keyword id="KW-0238">DNA-binding</keyword>
<keyword id="KW-0539">Nucleus</keyword>
<keyword id="KW-1185">Reference proteome</keyword>
<keyword id="KW-0678">Repressor</keyword>
<keyword id="KW-0804">Transcription</keyword>
<keyword id="KW-0805">Transcription regulation</keyword>
<sequence length="445" mass="47754">MAMSELGIQKTSDGTVSRLLNVVESELQAGREKGDPTEKQLQIILEDAPLWQRFKEVTNEMIVTKNGRRMFPVLKISVSGLDPNAMYSLLLDFVPTDSHRWKYVNGEWVPAGKPEVSSHSCVYIHPDSPNFGAHWMKAPISFSKVKLTNKLNGGGQIMLNSLHKYEPQVHIVRVGGAHRMVMNCSFPETQFIAVTAYQNEEITALKIKYNPFAKAFLDAKERNHLKDIPEAVSESQHVAYSHLGGWIFSNPDGVCAAGNANYQYATPLPLSAPHTHHGCEPYPGLRGHRQAPYPSAYMHRNHSPSVNLIESSSNNLQVFSGPDSWTSLSSTPHTSILSVPHTSGPINPGPSPYPCLWTISNSGGGPAGPGPDVHASSPGAFLLGGPAVTSPLSAQAPTSAGVEVLGEPSLTSIAVSTWTAVASHPFSGWGGPGGGGHHSPSSLDS</sequence>
<comment type="function">
    <text evidence="1">Transcriptional regulator involved in developmental processes. Can activate POMC gene expression and repress the alpha glycoprotein subunit and thyroid-stimulating hormone beta promoters (By similarity).</text>
</comment>
<comment type="subcellular location">
    <subcellularLocation>
        <location evidence="3">Nucleus</location>
    </subcellularLocation>
</comment>